<dbReference type="EC" id="2.7.1.2" evidence="1"/>
<dbReference type="EMBL" id="AL513382">
    <property type="protein sequence ID" value="CAD07641.1"/>
    <property type="molecule type" value="Genomic_DNA"/>
</dbReference>
<dbReference type="EMBL" id="AE014613">
    <property type="protein sequence ID" value="AAO68166.1"/>
    <property type="molecule type" value="Genomic_DNA"/>
</dbReference>
<dbReference type="RefSeq" id="NP_456946.1">
    <property type="nucleotide sequence ID" value="NC_003198.1"/>
</dbReference>
<dbReference type="RefSeq" id="WP_000170371.1">
    <property type="nucleotide sequence ID" value="NZ_WSUR01000025.1"/>
</dbReference>
<dbReference type="SMR" id="P58618"/>
<dbReference type="STRING" id="220341.gene:17586539"/>
<dbReference type="KEGG" id="stt:t0454"/>
<dbReference type="KEGG" id="sty:STY2644"/>
<dbReference type="PATRIC" id="fig|220341.7.peg.2680"/>
<dbReference type="eggNOG" id="COG0837">
    <property type="taxonomic scope" value="Bacteria"/>
</dbReference>
<dbReference type="HOGENOM" id="CLU_042582_1_0_6"/>
<dbReference type="OMA" id="NNHWRLS"/>
<dbReference type="OrthoDB" id="9800595at2"/>
<dbReference type="Proteomes" id="UP000000541">
    <property type="component" value="Chromosome"/>
</dbReference>
<dbReference type="Proteomes" id="UP000002670">
    <property type="component" value="Chromosome"/>
</dbReference>
<dbReference type="GO" id="GO:0005829">
    <property type="term" value="C:cytosol"/>
    <property type="evidence" value="ECO:0007669"/>
    <property type="project" value="TreeGrafter"/>
</dbReference>
<dbReference type="GO" id="GO:0005524">
    <property type="term" value="F:ATP binding"/>
    <property type="evidence" value="ECO:0007669"/>
    <property type="project" value="UniProtKB-UniRule"/>
</dbReference>
<dbReference type="GO" id="GO:0005536">
    <property type="term" value="F:D-glucose binding"/>
    <property type="evidence" value="ECO:0007669"/>
    <property type="project" value="InterPro"/>
</dbReference>
<dbReference type="GO" id="GO:0004340">
    <property type="term" value="F:glucokinase activity"/>
    <property type="evidence" value="ECO:0007669"/>
    <property type="project" value="UniProtKB-UniRule"/>
</dbReference>
<dbReference type="GO" id="GO:0006096">
    <property type="term" value="P:glycolytic process"/>
    <property type="evidence" value="ECO:0007669"/>
    <property type="project" value="UniProtKB-UniRule"/>
</dbReference>
<dbReference type="CDD" id="cd24008">
    <property type="entry name" value="ASKHA_NBD_GLK"/>
    <property type="match status" value="1"/>
</dbReference>
<dbReference type="FunFam" id="3.30.420.40:FF:000045">
    <property type="entry name" value="Glucokinase"/>
    <property type="match status" value="1"/>
</dbReference>
<dbReference type="FunFam" id="3.40.367.20:FF:000002">
    <property type="entry name" value="Glucokinase"/>
    <property type="match status" value="1"/>
</dbReference>
<dbReference type="Gene3D" id="3.30.420.40">
    <property type="match status" value="1"/>
</dbReference>
<dbReference type="Gene3D" id="3.40.367.20">
    <property type="match status" value="1"/>
</dbReference>
<dbReference type="HAMAP" id="MF_00524">
    <property type="entry name" value="Glucokinase"/>
    <property type="match status" value="1"/>
</dbReference>
<dbReference type="InterPro" id="IPR043129">
    <property type="entry name" value="ATPase_NBD"/>
</dbReference>
<dbReference type="InterPro" id="IPR050201">
    <property type="entry name" value="Bacterial_glucokinase"/>
</dbReference>
<dbReference type="InterPro" id="IPR003836">
    <property type="entry name" value="Glucokinase"/>
</dbReference>
<dbReference type="NCBIfam" id="TIGR00749">
    <property type="entry name" value="glk"/>
    <property type="match status" value="1"/>
</dbReference>
<dbReference type="NCBIfam" id="NF001414">
    <property type="entry name" value="PRK00292.1-1"/>
    <property type="match status" value="1"/>
</dbReference>
<dbReference type="NCBIfam" id="NF001416">
    <property type="entry name" value="PRK00292.1-3"/>
    <property type="match status" value="1"/>
</dbReference>
<dbReference type="PANTHER" id="PTHR47690">
    <property type="entry name" value="GLUCOKINASE"/>
    <property type="match status" value="1"/>
</dbReference>
<dbReference type="PANTHER" id="PTHR47690:SF1">
    <property type="entry name" value="GLUCOKINASE"/>
    <property type="match status" value="1"/>
</dbReference>
<dbReference type="Pfam" id="PF02685">
    <property type="entry name" value="Glucokinase"/>
    <property type="match status" value="1"/>
</dbReference>
<dbReference type="SUPFAM" id="SSF53067">
    <property type="entry name" value="Actin-like ATPase domain"/>
    <property type="match status" value="1"/>
</dbReference>
<name>GLK_SALTI</name>
<feature type="chain" id="PRO_0000215137" description="Glucokinase">
    <location>
        <begin position="1"/>
        <end position="321"/>
    </location>
</feature>
<feature type="binding site" evidence="1">
    <location>
        <begin position="8"/>
        <end position="13"/>
    </location>
    <ligand>
        <name>ATP</name>
        <dbReference type="ChEBI" id="CHEBI:30616"/>
    </ligand>
</feature>
<gene>
    <name evidence="1" type="primary">glk</name>
    <name type="ordered locus">STY2644</name>
    <name type="ordered locus">t0454</name>
</gene>
<protein>
    <recommendedName>
        <fullName evidence="1">Glucokinase</fullName>
        <ecNumber evidence="1">2.7.1.2</ecNumber>
    </recommendedName>
    <alternativeName>
        <fullName evidence="1">Glucose kinase</fullName>
    </alternativeName>
</protein>
<reference key="1">
    <citation type="journal article" date="2001" name="Nature">
        <title>Complete genome sequence of a multiple drug resistant Salmonella enterica serovar Typhi CT18.</title>
        <authorList>
            <person name="Parkhill J."/>
            <person name="Dougan G."/>
            <person name="James K.D."/>
            <person name="Thomson N.R."/>
            <person name="Pickard D."/>
            <person name="Wain J."/>
            <person name="Churcher C.M."/>
            <person name="Mungall K.L."/>
            <person name="Bentley S.D."/>
            <person name="Holden M.T.G."/>
            <person name="Sebaihia M."/>
            <person name="Baker S."/>
            <person name="Basham D."/>
            <person name="Brooks K."/>
            <person name="Chillingworth T."/>
            <person name="Connerton P."/>
            <person name="Cronin A."/>
            <person name="Davis P."/>
            <person name="Davies R.M."/>
            <person name="Dowd L."/>
            <person name="White N."/>
            <person name="Farrar J."/>
            <person name="Feltwell T."/>
            <person name="Hamlin N."/>
            <person name="Haque A."/>
            <person name="Hien T.T."/>
            <person name="Holroyd S."/>
            <person name="Jagels K."/>
            <person name="Krogh A."/>
            <person name="Larsen T.S."/>
            <person name="Leather S."/>
            <person name="Moule S."/>
            <person name="O'Gaora P."/>
            <person name="Parry C."/>
            <person name="Quail M.A."/>
            <person name="Rutherford K.M."/>
            <person name="Simmonds M."/>
            <person name="Skelton J."/>
            <person name="Stevens K."/>
            <person name="Whitehead S."/>
            <person name="Barrell B.G."/>
        </authorList>
    </citation>
    <scope>NUCLEOTIDE SEQUENCE [LARGE SCALE GENOMIC DNA]</scope>
    <source>
        <strain>CT18</strain>
    </source>
</reference>
<reference key="2">
    <citation type="journal article" date="2003" name="J. Bacteriol.">
        <title>Comparative genomics of Salmonella enterica serovar Typhi strains Ty2 and CT18.</title>
        <authorList>
            <person name="Deng W."/>
            <person name="Liou S.-R."/>
            <person name="Plunkett G. III"/>
            <person name="Mayhew G.F."/>
            <person name="Rose D.J."/>
            <person name="Burland V."/>
            <person name="Kodoyianni V."/>
            <person name="Schwartz D.C."/>
            <person name="Blattner F.R."/>
        </authorList>
    </citation>
    <scope>NUCLEOTIDE SEQUENCE [LARGE SCALE GENOMIC DNA]</scope>
    <source>
        <strain>ATCC 700931 / Ty2</strain>
    </source>
</reference>
<organism>
    <name type="scientific">Salmonella typhi</name>
    <dbReference type="NCBI Taxonomy" id="90370"/>
    <lineage>
        <taxon>Bacteria</taxon>
        <taxon>Pseudomonadati</taxon>
        <taxon>Pseudomonadota</taxon>
        <taxon>Gammaproteobacteria</taxon>
        <taxon>Enterobacterales</taxon>
        <taxon>Enterobacteriaceae</taxon>
        <taxon>Salmonella</taxon>
    </lineage>
</organism>
<evidence type="ECO:0000255" key="1">
    <source>
        <dbReference type="HAMAP-Rule" id="MF_00524"/>
    </source>
</evidence>
<accession>P58618</accession>
<keyword id="KW-0067">ATP-binding</keyword>
<keyword id="KW-0963">Cytoplasm</keyword>
<keyword id="KW-0324">Glycolysis</keyword>
<keyword id="KW-0418">Kinase</keyword>
<keyword id="KW-0547">Nucleotide-binding</keyword>
<keyword id="KW-0808">Transferase</keyword>
<proteinExistence type="inferred from homology"/>
<comment type="catalytic activity">
    <reaction evidence="1">
        <text>D-glucose + ATP = D-glucose 6-phosphate + ADP + H(+)</text>
        <dbReference type="Rhea" id="RHEA:17825"/>
        <dbReference type="ChEBI" id="CHEBI:4167"/>
        <dbReference type="ChEBI" id="CHEBI:15378"/>
        <dbReference type="ChEBI" id="CHEBI:30616"/>
        <dbReference type="ChEBI" id="CHEBI:61548"/>
        <dbReference type="ChEBI" id="CHEBI:456216"/>
        <dbReference type="EC" id="2.7.1.2"/>
    </reaction>
</comment>
<comment type="subcellular location">
    <subcellularLocation>
        <location evidence="1">Cytoplasm</location>
    </subcellularLocation>
</comment>
<comment type="similarity">
    <text evidence="1">Belongs to the bacterial glucokinase family.</text>
</comment>
<sequence>MTKYALVGDVGGTNARLALCDIASGEISQAKTYSGLDYPSLEAVVRVYLDEHGVSVEDGCIAIACPITGDWVAMTNHTWAFSIAEMKKNLGFSHLEIINDFTAVSMAIPMLKKEHLIQFGGGEPVDGKPIAVYGAGTGLGVAHLVHVDKRWISLPGEGGHVDFAPNSEEEAMILEILRAEIGHVSAERVLSGPGLVNLYRAIVKSDNRLPENLRPKDITERALADSCIDCRRALSLFCVIMGRFGGDLALTMGTFGGVYIAGGIVPRFLEFFKASGFRGGFEDKGRFKDYVHGIPVYLIVHDNPGLLGSGAHLRQTLGHIL</sequence>